<gene>
    <name evidence="1" type="primary">folD</name>
    <name type="ordered locus">EUBREC_1957</name>
</gene>
<proteinExistence type="inferred from homology"/>
<evidence type="ECO:0000255" key="1">
    <source>
        <dbReference type="HAMAP-Rule" id="MF_01576"/>
    </source>
</evidence>
<organism>
    <name type="scientific">Agathobacter rectalis (strain ATCC 33656 / DSM 3377 / JCM 17463 / KCTC 5835 / VPI 0990)</name>
    <name type="common">Eubacterium rectale</name>
    <dbReference type="NCBI Taxonomy" id="515619"/>
    <lineage>
        <taxon>Bacteria</taxon>
        <taxon>Bacillati</taxon>
        <taxon>Bacillota</taxon>
        <taxon>Clostridia</taxon>
        <taxon>Lachnospirales</taxon>
        <taxon>Lachnospiraceae</taxon>
        <taxon>Agathobacter</taxon>
    </lineage>
</organism>
<comment type="function">
    <text evidence="1">Catalyzes the oxidation of 5,10-methylenetetrahydrofolate to 5,10-methenyltetrahydrofolate and then the hydrolysis of 5,10-methenyltetrahydrofolate to 10-formyltetrahydrofolate.</text>
</comment>
<comment type="catalytic activity">
    <reaction evidence="1">
        <text>(6R)-5,10-methylene-5,6,7,8-tetrahydrofolate + NADP(+) = (6R)-5,10-methenyltetrahydrofolate + NADPH</text>
        <dbReference type="Rhea" id="RHEA:22812"/>
        <dbReference type="ChEBI" id="CHEBI:15636"/>
        <dbReference type="ChEBI" id="CHEBI:57455"/>
        <dbReference type="ChEBI" id="CHEBI:57783"/>
        <dbReference type="ChEBI" id="CHEBI:58349"/>
        <dbReference type="EC" id="1.5.1.5"/>
    </reaction>
</comment>
<comment type="catalytic activity">
    <reaction evidence="1">
        <text>(6R)-5,10-methenyltetrahydrofolate + H2O = (6R)-10-formyltetrahydrofolate + H(+)</text>
        <dbReference type="Rhea" id="RHEA:23700"/>
        <dbReference type="ChEBI" id="CHEBI:15377"/>
        <dbReference type="ChEBI" id="CHEBI:15378"/>
        <dbReference type="ChEBI" id="CHEBI:57455"/>
        <dbReference type="ChEBI" id="CHEBI:195366"/>
        <dbReference type="EC" id="3.5.4.9"/>
    </reaction>
</comment>
<comment type="pathway">
    <text evidence="1">One-carbon metabolism; tetrahydrofolate interconversion.</text>
</comment>
<comment type="subunit">
    <text evidence="1">Homodimer.</text>
</comment>
<comment type="similarity">
    <text evidence="1">Belongs to the tetrahydrofolate dehydrogenase/cyclohydrolase family.</text>
</comment>
<protein>
    <recommendedName>
        <fullName evidence="1">Bifunctional protein FolD</fullName>
    </recommendedName>
    <domain>
        <recommendedName>
            <fullName evidence="1">Methylenetetrahydrofolate dehydrogenase</fullName>
            <ecNumber evidence="1">1.5.1.5</ecNumber>
        </recommendedName>
    </domain>
    <domain>
        <recommendedName>
            <fullName evidence="1">Methenyltetrahydrofolate cyclohydrolase</fullName>
            <ecNumber evidence="1">3.5.4.9</ecNumber>
        </recommendedName>
    </domain>
</protein>
<sequence length="279" mass="30010">MANLIDGKLISTQIKDELKEEVTELKKKGIEGCLAVIQVGNDPASSVYVRNKKKACEYVGIKSLSYELAEETTEDEILKLIEKLNADSSVNGILCQLPLPKHIDEDKVIDAIDPKKDVDGFSPQSVGAMVIGKPGFLPCTPAGIIQLLKRSNIDIDGKSCVVVGRSNIVGKPMSLLMLRENATVTVCHSHTKDLKDVCKNADILIVAIGKPKFIDASYVKDGAVVIDVGIHRNAENKLCGDVDFDSVVSKASHITPVPGGVGPMTIAMLMSNCVEAMKR</sequence>
<feature type="chain" id="PRO_1000215597" description="Bifunctional protein FolD">
    <location>
        <begin position="1"/>
        <end position="279"/>
    </location>
</feature>
<feature type="binding site" evidence="1">
    <location>
        <begin position="164"/>
        <end position="166"/>
    </location>
    <ligand>
        <name>NADP(+)</name>
        <dbReference type="ChEBI" id="CHEBI:58349"/>
    </ligand>
</feature>
<feature type="binding site" evidence="1">
    <location>
        <position position="189"/>
    </location>
    <ligand>
        <name>NADP(+)</name>
        <dbReference type="ChEBI" id="CHEBI:58349"/>
    </ligand>
</feature>
<feature type="binding site" evidence="1">
    <location>
        <position position="230"/>
    </location>
    <ligand>
        <name>NADP(+)</name>
        <dbReference type="ChEBI" id="CHEBI:58349"/>
    </ligand>
</feature>
<reference key="1">
    <citation type="journal article" date="2009" name="Proc. Natl. Acad. Sci. U.S.A.">
        <title>Characterizing a model human gut microbiota composed of members of its two dominant bacterial phyla.</title>
        <authorList>
            <person name="Mahowald M.A."/>
            <person name="Rey F.E."/>
            <person name="Seedorf H."/>
            <person name="Turnbaugh P.J."/>
            <person name="Fulton R.S."/>
            <person name="Wollam A."/>
            <person name="Shah N."/>
            <person name="Wang C."/>
            <person name="Magrini V."/>
            <person name="Wilson R.K."/>
            <person name="Cantarel B.L."/>
            <person name="Coutinho P.M."/>
            <person name="Henrissat B."/>
            <person name="Crock L.W."/>
            <person name="Russell A."/>
            <person name="Verberkmoes N.C."/>
            <person name="Hettich R.L."/>
            <person name="Gordon J.I."/>
        </authorList>
    </citation>
    <scope>NUCLEOTIDE SEQUENCE [LARGE SCALE GENOMIC DNA]</scope>
    <source>
        <strain>ATCC 33656 / DSM 3377 / JCM 17463 / KCTC 5835 / LMG 30912 / VPI 0990</strain>
    </source>
</reference>
<dbReference type="EC" id="1.5.1.5" evidence="1"/>
<dbReference type="EC" id="3.5.4.9" evidence="1"/>
<dbReference type="EMBL" id="CP001107">
    <property type="protein sequence ID" value="ACR75699.1"/>
    <property type="molecule type" value="Genomic_DNA"/>
</dbReference>
<dbReference type="RefSeq" id="WP_012742796.1">
    <property type="nucleotide sequence ID" value="NC_012781.1"/>
</dbReference>
<dbReference type="SMR" id="C4ZBG7"/>
<dbReference type="STRING" id="515619.EUBREC_1957"/>
<dbReference type="PaxDb" id="515619-EUBREC_1957"/>
<dbReference type="GeneID" id="86988748"/>
<dbReference type="KEGG" id="ere:EUBREC_1957"/>
<dbReference type="HOGENOM" id="CLU_034045_2_1_9"/>
<dbReference type="UniPathway" id="UPA00193"/>
<dbReference type="Proteomes" id="UP000001477">
    <property type="component" value="Chromosome"/>
</dbReference>
<dbReference type="GO" id="GO:0005829">
    <property type="term" value="C:cytosol"/>
    <property type="evidence" value="ECO:0007669"/>
    <property type="project" value="TreeGrafter"/>
</dbReference>
<dbReference type="GO" id="GO:0004477">
    <property type="term" value="F:methenyltetrahydrofolate cyclohydrolase activity"/>
    <property type="evidence" value="ECO:0007669"/>
    <property type="project" value="UniProtKB-UniRule"/>
</dbReference>
<dbReference type="GO" id="GO:0004488">
    <property type="term" value="F:methylenetetrahydrofolate dehydrogenase (NADP+) activity"/>
    <property type="evidence" value="ECO:0007669"/>
    <property type="project" value="UniProtKB-UniRule"/>
</dbReference>
<dbReference type="GO" id="GO:0000105">
    <property type="term" value="P:L-histidine biosynthetic process"/>
    <property type="evidence" value="ECO:0007669"/>
    <property type="project" value="UniProtKB-KW"/>
</dbReference>
<dbReference type="GO" id="GO:0009086">
    <property type="term" value="P:methionine biosynthetic process"/>
    <property type="evidence" value="ECO:0007669"/>
    <property type="project" value="UniProtKB-KW"/>
</dbReference>
<dbReference type="GO" id="GO:0006164">
    <property type="term" value="P:purine nucleotide biosynthetic process"/>
    <property type="evidence" value="ECO:0007669"/>
    <property type="project" value="UniProtKB-KW"/>
</dbReference>
<dbReference type="GO" id="GO:0035999">
    <property type="term" value="P:tetrahydrofolate interconversion"/>
    <property type="evidence" value="ECO:0007669"/>
    <property type="project" value="UniProtKB-UniRule"/>
</dbReference>
<dbReference type="CDD" id="cd01080">
    <property type="entry name" value="NAD_bind_m-THF_DH_Cyclohyd"/>
    <property type="match status" value="1"/>
</dbReference>
<dbReference type="FunFam" id="3.40.50.720:FF:000094">
    <property type="entry name" value="Bifunctional protein FolD"/>
    <property type="match status" value="1"/>
</dbReference>
<dbReference type="FunFam" id="3.40.50.10860:FF:000005">
    <property type="entry name" value="C-1-tetrahydrofolate synthase, cytoplasmic, putative"/>
    <property type="match status" value="1"/>
</dbReference>
<dbReference type="Gene3D" id="3.40.50.10860">
    <property type="entry name" value="Leucine Dehydrogenase, chain A, domain 1"/>
    <property type="match status" value="1"/>
</dbReference>
<dbReference type="Gene3D" id="3.40.50.720">
    <property type="entry name" value="NAD(P)-binding Rossmann-like Domain"/>
    <property type="match status" value="1"/>
</dbReference>
<dbReference type="HAMAP" id="MF_01576">
    <property type="entry name" value="THF_DHG_CYH"/>
    <property type="match status" value="1"/>
</dbReference>
<dbReference type="InterPro" id="IPR046346">
    <property type="entry name" value="Aminoacid_DH-like_N_sf"/>
</dbReference>
<dbReference type="InterPro" id="IPR036291">
    <property type="entry name" value="NAD(P)-bd_dom_sf"/>
</dbReference>
<dbReference type="InterPro" id="IPR000672">
    <property type="entry name" value="THF_DH/CycHdrlase"/>
</dbReference>
<dbReference type="InterPro" id="IPR020630">
    <property type="entry name" value="THF_DH/CycHdrlase_cat_dom"/>
</dbReference>
<dbReference type="InterPro" id="IPR020867">
    <property type="entry name" value="THF_DH/CycHdrlase_CS"/>
</dbReference>
<dbReference type="InterPro" id="IPR020631">
    <property type="entry name" value="THF_DH/CycHdrlase_NAD-bd_dom"/>
</dbReference>
<dbReference type="NCBIfam" id="NF008058">
    <property type="entry name" value="PRK10792.1"/>
    <property type="match status" value="1"/>
</dbReference>
<dbReference type="NCBIfam" id="NF010783">
    <property type="entry name" value="PRK14186.1"/>
    <property type="match status" value="1"/>
</dbReference>
<dbReference type="PANTHER" id="PTHR48099:SF5">
    <property type="entry name" value="C-1-TETRAHYDROFOLATE SYNTHASE, CYTOPLASMIC"/>
    <property type="match status" value="1"/>
</dbReference>
<dbReference type="PANTHER" id="PTHR48099">
    <property type="entry name" value="C-1-TETRAHYDROFOLATE SYNTHASE, CYTOPLASMIC-RELATED"/>
    <property type="match status" value="1"/>
</dbReference>
<dbReference type="Pfam" id="PF00763">
    <property type="entry name" value="THF_DHG_CYH"/>
    <property type="match status" value="1"/>
</dbReference>
<dbReference type="Pfam" id="PF02882">
    <property type="entry name" value="THF_DHG_CYH_C"/>
    <property type="match status" value="1"/>
</dbReference>
<dbReference type="PRINTS" id="PR00085">
    <property type="entry name" value="THFDHDRGNASE"/>
</dbReference>
<dbReference type="SUPFAM" id="SSF53223">
    <property type="entry name" value="Aminoacid dehydrogenase-like, N-terminal domain"/>
    <property type="match status" value="1"/>
</dbReference>
<dbReference type="SUPFAM" id="SSF51735">
    <property type="entry name" value="NAD(P)-binding Rossmann-fold domains"/>
    <property type="match status" value="1"/>
</dbReference>
<dbReference type="PROSITE" id="PS00767">
    <property type="entry name" value="THF_DHG_CYH_2"/>
    <property type="match status" value="1"/>
</dbReference>
<accession>C4ZBG7</accession>
<name>FOLD_AGARV</name>
<keyword id="KW-0028">Amino-acid biosynthesis</keyword>
<keyword id="KW-0368">Histidine biosynthesis</keyword>
<keyword id="KW-0378">Hydrolase</keyword>
<keyword id="KW-0486">Methionine biosynthesis</keyword>
<keyword id="KW-0511">Multifunctional enzyme</keyword>
<keyword id="KW-0521">NADP</keyword>
<keyword id="KW-0554">One-carbon metabolism</keyword>
<keyword id="KW-0560">Oxidoreductase</keyword>
<keyword id="KW-0658">Purine biosynthesis</keyword>